<feature type="initiator methionine" description="Removed" evidence="1">
    <location>
        <position position="1"/>
    </location>
</feature>
<feature type="chain" id="PRO_1000075713" description="Formamidopyrimidine-DNA glycosylase">
    <location>
        <begin position="2"/>
        <end position="271"/>
    </location>
</feature>
<feature type="zinc finger region" description="FPG-type" evidence="2">
    <location>
        <begin position="236"/>
        <end position="270"/>
    </location>
</feature>
<feature type="active site" description="Schiff-base intermediate with DNA" evidence="2">
    <location>
        <position position="2"/>
    </location>
</feature>
<feature type="active site" description="Proton donor" evidence="2">
    <location>
        <position position="3"/>
    </location>
</feature>
<feature type="active site" description="Proton donor; for beta-elimination activity" evidence="2">
    <location>
        <position position="57"/>
    </location>
</feature>
<feature type="active site" description="Proton donor; for delta-elimination activity" evidence="2">
    <location>
        <position position="260"/>
    </location>
</feature>
<feature type="binding site" evidence="2">
    <location>
        <position position="90"/>
    </location>
    <ligand>
        <name>DNA</name>
        <dbReference type="ChEBI" id="CHEBI:16991"/>
    </ligand>
</feature>
<feature type="binding site" evidence="2">
    <location>
        <position position="109"/>
    </location>
    <ligand>
        <name>DNA</name>
        <dbReference type="ChEBI" id="CHEBI:16991"/>
    </ligand>
</feature>
<feature type="binding site" evidence="2">
    <location>
        <position position="151"/>
    </location>
    <ligand>
        <name>DNA</name>
        <dbReference type="ChEBI" id="CHEBI:16991"/>
    </ligand>
</feature>
<dbReference type="EC" id="3.2.2.23" evidence="2"/>
<dbReference type="EC" id="4.2.99.18" evidence="2"/>
<dbReference type="EMBL" id="CP000931">
    <property type="protein sequence ID" value="ABZ74716.1"/>
    <property type="molecule type" value="Genomic_DNA"/>
</dbReference>
<dbReference type="RefSeq" id="WP_012275273.1">
    <property type="nucleotide sequence ID" value="NC_010334.1"/>
</dbReference>
<dbReference type="SMR" id="B0TN04"/>
<dbReference type="STRING" id="458817.Shal_0140"/>
<dbReference type="KEGG" id="shl:Shal_0140"/>
<dbReference type="eggNOG" id="COG0266">
    <property type="taxonomic scope" value="Bacteria"/>
</dbReference>
<dbReference type="HOGENOM" id="CLU_038423_1_1_6"/>
<dbReference type="OrthoDB" id="9800855at2"/>
<dbReference type="Proteomes" id="UP000001317">
    <property type="component" value="Chromosome"/>
</dbReference>
<dbReference type="GO" id="GO:0034039">
    <property type="term" value="F:8-oxo-7,8-dihydroguanine DNA N-glycosylase activity"/>
    <property type="evidence" value="ECO:0007669"/>
    <property type="project" value="TreeGrafter"/>
</dbReference>
<dbReference type="GO" id="GO:0140078">
    <property type="term" value="F:class I DNA-(apurinic or apyrimidinic site) endonuclease activity"/>
    <property type="evidence" value="ECO:0007669"/>
    <property type="project" value="UniProtKB-EC"/>
</dbReference>
<dbReference type="GO" id="GO:0003684">
    <property type="term" value="F:damaged DNA binding"/>
    <property type="evidence" value="ECO:0007669"/>
    <property type="project" value="InterPro"/>
</dbReference>
<dbReference type="GO" id="GO:0008270">
    <property type="term" value="F:zinc ion binding"/>
    <property type="evidence" value="ECO:0007669"/>
    <property type="project" value="UniProtKB-UniRule"/>
</dbReference>
<dbReference type="GO" id="GO:0006284">
    <property type="term" value="P:base-excision repair"/>
    <property type="evidence" value="ECO:0007669"/>
    <property type="project" value="InterPro"/>
</dbReference>
<dbReference type="CDD" id="cd08966">
    <property type="entry name" value="EcFpg-like_N"/>
    <property type="match status" value="1"/>
</dbReference>
<dbReference type="FunFam" id="1.10.8.50:FF:000003">
    <property type="entry name" value="Formamidopyrimidine-DNA glycosylase"/>
    <property type="match status" value="1"/>
</dbReference>
<dbReference type="FunFam" id="3.20.190.10:FF:000001">
    <property type="entry name" value="Formamidopyrimidine-DNA glycosylase"/>
    <property type="match status" value="1"/>
</dbReference>
<dbReference type="Gene3D" id="1.10.8.50">
    <property type="match status" value="1"/>
</dbReference>
<dbReference type="Gene3D" id="3.20.190.10">
    <property type="entry name" value="MutM-like, N-terminal"/>
    <property type="match status" value="1"/>
</dbReference>
<dbReference type="HAMAP" id="MF_00103">
    <property type="entry name" value="Fapy_DNA_glycosyl"/>
    <property type="match status" value="1"/>
</dbReference>
<dbReference type="InterPro" id="IPR015886">
    <property type="entry name" value="DNA_glyclase/AP_lyase_DNA-bd"/>
</dbReference>
<dbReference type="InterPro" id="IPR015887">
    <property type="entry name" value="DNA_glyclase_Znf_dom_DNA_BS"/>
</dbReference>
<dbReference type="InterPro" id="IPR020629">
    <property type="entry name" value="Formamido-pyr_DNA_Glyclase"/>
</dbReference>
<dbReference type="InterPro" id="IPR012319">
    <property type="entry name" value="FPG_cat"/>
</dbReference>
<dbReference type="InterPro" id="IPR035937">
    <property type="entry name" value="MutM-like_N-ter"/>
</dbReference>
<dbReference type="InterPro" id="IPR010979">
    <property type="entry name" value="Ribosomal_uS13-like_H2TH"/>
</dbReference>
<dbReference type="InterPro" id="IPR000214">
    <property type="entry name" value="Znf_DNA_glyclase/AP_lyase"/>
</dbReference>
<dbReference type="InterPro" id="IPR010663">
    <property type="entry name" value="Znf_FPG/IleRS"/>
</dbReference>
<dbReference type="NCBIfam" id="TIGR00577">
    <property type="entry name" value="fpg"/>
    <property type="match status" value="1"/>
</dbReference>
<dbReference type="NCBIfam" id="NF002211">
    <property type="entry name" value="PRK01103.1"/>
    <property type="match status" value="1"/>
</dbReference>
<dbReference type="PANTHER" id="PTHR22993">
    <property type="entry name" value="FORMAMIDOPYRIMIDINE-DNA GLYCOSYLASE"/>
    <property type="match status" value="1"/>
</dbReference>
<dbReference type="PANTHER" id="PTHR22993:SF9">
    <property type="entry name" value="FORMAMIDOPYRIMIDINE-DNA GLYCOSYLASE"/>
    <property type="match status" value="1"/>
</dbReference>
<dbReference type="Pfam" id="PF01149">
    <property type="entry name" value="Fapy_DNA_glyco"/>
    <property type="match status" value="1"/>
</dbReference>
<dbReference type="Pfam" id="PF06831">
    <property type="entry name" value="H2TH"/>
    <property type="match status" value="1"/>
</dbReference>
<dbReference type="Pfam" id="PF06827">
    <property type="entry name" value="zf-FPG_IleRS"/>
    <property type="match status" value="1"/>
</dbReference>
<dbReference type="SMART" id="SM00898">
    <property type="entry name" value="Fapy_DNA_glyco"/>
    <property type="match status" value="1"/>
</dbReference>
<dbReference type="SMART" id="SM01232">
    <property type="entry name" value="H2TH"/>
    <property type="match status" value="1"/>
</dbReference>
<dbReference type="SUPFAM" id="SSF57716">
    <property type="entry name" value="Glucocorticoid receptor-like (DNA-binding domain)"/>
    <property type="match status" value="1"/>
</dbReference>
<dbReference type="SUPFAM" id="SSF81624">
    <property type="entry name" value="N-terminal domain of MutM-like DNA repair proteins"/>
    <property type="match status" value="1"/>
</dbReference>
<dbReference type="SUPFAM" id="SSF46946">
    <property type="entry name" value="S13-like H2TH domain"/>
    <property type="match status" value="1"/>
</dbReference>
<dbReference type="PROSITE" id="PS51068">
    <property type="entry name" value="FPG_CAT"/>
    <property type="match status" value="1"/>
</dbReference>
<dbReference type="PROSITE" id="PS01242">
    <property type="entry name" value="ZF_FPG_1"/>
    <property type="match status" value="1"/>
</dbReference>
<dbReference type="PROSITE" id="PS51066">
    <property type="entry name" value="ZF_FPG_2"/>
    <property type="match status" value="1"/>
</dbReference>
<proteinExistence type="inferred from homology"/>
<comment type="function">
    <text evidence="2">Involved in base excision repair of DNA damaged by oxidation or by mutagenic agents. Acts as a DNA glycosylase that recognizes and removes damaged bases. Has a preference for oxidized purines, such as 7,8-dihydro-8-oxoguanine (8-oxoG). Has AP (apurinic/apyrimidinic) lyase activity and introduces nicks in the DNA strand. Cleaves the DNA backbone by beta-delta elimination to generate a single-strand break at the site of the removed base with both 3'- and 5'-phosphates.</text>
</comment>
<comment type="catalytic activity">
    <reaction evidence="2">
        <text>Hydrolysis of DNA containing ring-opened 7-methylguanine residues, releasing 2,6-diamino-4-hydroxy-5-(N-methyl)formamidopyrimidine.</text>
        <dbReference type="EC" id="3.2.2.23"/>
    </reaction>
</comment>
<comment type="catalytic activity">
    <reaction evidence="2">
        <text>2'-deoxyribonucleotide-(2'-deoxyribose 5'-phosphate)-2'-deoxyribonucleotide-DNA = a 3'-end 2'-deoxyribonucleotide-(2,3-dehydro-2,3-deoxyribose 5'-phosphate)-DNA + a 5'-end 5'-phospho-2'-deoxyribonucleoside-DNA + H(+)</text>
        <dbReference type="Rhea" id="RHEA:66592"/>
        <dbReference type="Rhea" id="RHEA-COMP:13180"/>
        <dbReference type="Rhea" id="RHEA-COMP:16897"/>
        <dbReference type="Rhea" id="RHEA-COMP:17067"/>
        <dbReference type="ChEBI" id="CHEBI:15378"/>
        <dbReference type="ChEBI" id="CHEBI:136412"/>
        <dbReference type="ChEBI" id="CHEBI:157695"/>
        <dbReference type="ChEBI" id="CHEBI:167181"/>
        <dbReference type="EC" id="4.2.99.18"/>
    </reaction>
</comment>
<comment type="cofactor">
    <cofactor evidence="2">
        <name>Zn(2+)</name>
        <dbReference type="ChEBI" id="CHEBI:29105"/>
    </cofactor>
    <text evidence="2">Binds 1 zinc ion per subunit.</text>
</comment>
<comment type="subunit">
    <text evidence="2">Monomer.</text>
</comment>
<comment type="similarity">
    <text evidence="2">Belongs to the FPG family.</text>
</comment>
<protein>
    <recommendedName>
        <fullName evidence="2">Formamidopyrimidine-DNA glycosylase</fullName>
        <shortName evidence="2">Fapy-DNA glycosylase</shortName>
        <ecNumber evidence="2">3.2.2.23</ecNumber>
    </recommendedName>
    <alternativeName>
        <fullName evidence="2">DNA-(apurinic or apyrimidinic site) lyase MutM</fullName>
        <shortName evidence="2">AP lyase MutM</shortName>
        <ecNumber evidence="2">4.2.99.18</ecNumber>
    </alternativeName>
</protein>
<gene>
    <name evidence="2" type="primary">mutM</name>
    <name evidence="2" type="synonym">fpg</name>
    <name type="ordered locus">Shal_0140</name>
</gene>
<accession>B0TN04</accession>
<keyword id="KW-0227">DNA damage</keyword>
<keyword id="KW-0234">DNA repair</keyword>
<keyword id="KW-0238">DNA-binding</keyword>
<keyword id="KW-0326">Glycosidase</keyword>
<keyword id="KW-0378">Hydrolase</keyword>
<keyword id="KW-0456">Lyase</keyword>
<keyword id="KW-0479">Metal-binding</keyword>
<keyword id="KW-0511">Multifunctional enzyme</keyword>
<keyword id="KW-0862">Zinc</keyword>
<keyword id="KW-0863">Zinc-finger</keyword>
<organism>
    <name type="scientific">Shewanella halifaxensis (strain HAW-EB4)</name>
    <dbReference type="NCBI Taxonomy" id="458817"/>
    <lineage>
        <taxon>Bacteria</taxon>
        <taxon>Pseudomonadati</taxon>
        <taxon>Pseudomonadota</taxon>
        <taxon>Gammaproteobacteria</taxon>
        <taxon>Alteromonadales</taxon>
        <taxon>Shewanellaceae</taxon>
        <taxon>Shewanella</taxon>
    </lineage>
</organism>
<evidence type="ECO:0000250" key="1"/>
<evidence type="ECO:0000255" key="2">
    <source>
        <dbReference type="HAMAP-Rule" id="MF_00103"/>
    </source>
</evidence>
<reference key="1">
    <citation type="submission" date="2008-01" db="EMBL/GenBank/DDBJ databases">
        <title>Complete sequence of Shewanella halifaxensis HAW-EB4.</title>
        <authorList>
            <consortium name="US DOE Joint Genome Institute"/>
            <person name="Copeland A."/>
            <person name="Lucas S."/>
            <person name="Lapidus A."/>
            <person name="Glavina del Rio T."/>
            <person name="Dalin E."/>
            <person name="Tice H."/>
            <person name="Bruce D."/>
            <person name="Goodwin L."/>
            <person name="Pitluck S."/>
            <person name="Sims D."/>
            <person name="Brettin T."/>
            <person name="Detter J.C."/>
            <person name="Han C."/>
            <person name="Kuske C.R."/>
            <person name="Schmutz J."/>
            <person name="Larimer F."/>
            <person name="Land M."/>
            <person name="Hauser L."/>
            <person name="Kyrpides N."/>
            <person name="Kim E."/>
            <person name="Zhao J.-S."/>
            <person name="Richardson P."/>
        </authorList>
    </citation>
    <scope>NUCLEOTIDE SEQUENCE [LARGE SCALE GENOMIC DNA]</scope>
    <source>
        <strain>HAW-EB4</strain>
    </source>
</reference>
<name>FPG_SHEHH</name>
<sequence>MPELPEVEVTRQGVSPYLIDNQVTDLIVRNPSLRWPVPEIAKQIIGQTIRNVRRRGKYLLIDTDAGTTIVHLGMSGSLRILPASTPVEKHDHIDLVLASGKALRFNDPRRFGAWLWCELPEQAHPLLSKLGPEPLTDAFNAPYLLAALANKKKAIKLCLMDNHIVVGVGNIYANEALFAAGIHPQAEAGKVDAERIEILVSEVKQILASAIKQGGTTLKDFTNADGKPGYFAQKLHVYGRGGETCTQCGHLLSEIKLGQRATVFCSLCQKL</sequence>